<organism>
    <name type="scientific">Arabidopsis thaliana</name>
    <name type="common">Mouse-ear cress</name>
    <dbReference type="NCBI Taxonomy" id="3702"/>
    <lineage>
        <taxon>Eukaryota</taxon>
        <taxon>Viridiplantae</taxon>
        <taxon>Streptophyta</taxon>
        <taxon>Embryophyta</taxon>
        <taxon>Tracheophyta</taxon>
        <taxon>Spermatophyta</taxon>
        <taxon>Magnoliopsida</taxon>
        <taxon>eudicotyledons</taxon>
        <taxon>Gunneridae</taxon>
        <taxon>Pentapetalae</taxon>
        <taxon>rosids</taxon>
        <taxon>malvids</taxon>
        <taxon>Brassicales</taxon>
        <taxon>Brassicaceae</taxon>
        <taxon>Camelineae</taxon>
        <taxon>Arabidopsis</taxon>
    </lineage>
</organism>
<sequence length="908" mass="104682">MAEAFVSFGLEKLWDLLSRESERLQGIDGQLDGLKRQLRSLQSLLKDADAKKHGSDRVRNFLEDVKDLVFDAEDIIESYVLNKLSGKGKGVKKHVRRLACFLTDRHKVASDIEGITKRISEVIGEMQSFGIQQIIDGGRSLSLQERQRVQREIRQTYPDSSESDLVGVEQSVKELVGHLVENDVHQVVSIAGMGGIGKTTLARQVFHHDLVRRHFDGFAWVCVSQQFTQKHVWQRILQELQPHDGDILQMDEYALQRKLFQLLEAGRYLVVLDDVWKKEDWDVIKAVFPRKRGWKMLLTSRNEGVGIHADPTCLTFRASILNPEESWKLCERIVFPRRDETEVRLDEEMEAMGKEMVTHCGGLPLAVKALGGLLANKHTVPEWKRVFDNIGSQIVGGSWLDDNSLNSVYRILSLSYEDLPTHLKHCFLNLAHFPEDSEISTYSLFYYWAAEGIYDGSTIEDSGEYYLEELVRRNLVIADDNYLSWQSKYCQMHDMMREVCLSKAKEENFLQIIIDPTCTSTINAQSPSRSRRLSIHSGKAFHILGHKNKTKVRSLIVPRFEEDYWIRSASVFHNLTLLRVLDLSWVKFEGGKLPCSIGGLIHLRYLSLYEAKVSHLPSTMRNLKLLLYLNLRVDTEEPIHVPNVLKEMIQLRYLSLPLKMDDKTKLELGDLVNLEYLYGFSTQHSSVTDLLRMTKLRYLAVSLSERCNFETLSSSLRELRNLETLNFLFSLETYMVDYMGEFVLDHFIHLKQLGLAVRMSKIPDQHQFPPHLVHLFLIYCGMEEDPMPILEKLLHLKSVRLARKAFLGSRMVCSKGGFPQLCVIEISKESELEEWIVEEGSMPCLRTLTIDDCKKLKELPDGLKYITSLKELKIEGMKREWKEKLVPGGEDYYKVQHIPDVQFINCDQ</sequence>
<gene>
    <name type="primary">RPP8</name>
    <name type="synonym">HRT</name>
    <name type="ordered locus">At5g43470</name>
    <name type="ORF">MWF20.19</name>
</gene>
<dbReference type="EMBL" id="AF089710">
    <property type="protein sequence ID" value="AAC83165.1"/>
    <property type="molecule type" value="Genomic_DNA"/>
</dbReference>
<dbReference type="EMBL" id="AF089711">
    <property type="protein sequence ID" value="AAC78631.1"/>
    <property type="molecule type" value="Genomic_DNA"/>
</dbReference>
<dbReference type="EMBL" id="AF234174">
    <property type="protein sequence ID" value="AAF36987.1"/>
    <property type="molecule type" value="Genomic_DNA"/>
</dbReference>
<dbReference type="EMBL" id="AB025638">
    <property type="protein sequence ID" value="BAA97426.1"/>
    <property type="molecule type" value="Genomic_DNA"/>
</dbReference>
<dbReference type="EMBL" id="CP002688">
    <property type="protein sequence ID" value="AED94967.1"/>
    <property type="molecule type" value="Genomic_DNA"/>
</dbReference>
<dbReference type="EMBL" id="CP002688">
    <property type="protein sequence ID" value="AED94968.1"/>
    <property type="molecule type" value="Genomic_DNA"/>
</dbReference>
<dbReference type="EMBL" id="CP002688">
    <property type="protein sequence ID" value="ANM71032.1"/>
    <property type="molecule type" value="Genomic_DNA"/>
</dbReference>
<dbReference type="EMBL" id="CP002688">
    <property type="protein sequence ID" value="ANM71033.1"/>
    <property type="molecule type" value="Genomic_DNA"/>
</dbReference>
<dbReference type="EMBL" id="AK118862">
    <property type="protein sequence ID" value="BAC43449.1"/>
    <property type="molecule type" value="mRNA"/>
</dbReference>
<dbReference type="EMBL" id="AY062514">
    <property type="protein sequence ID" value="AAL32592.1"/>
    <property type="molecule type" value="mRNA"/>
</dbReference>
<dbReference type="PIR" id="T48898">
    <property type="entry name" value="T48898"/>
</dbReference>
<dbReference type="PIR" id="T48899">
    <property type="entry name" value="T48899"/>
</dbReference>
<dbReference type="RefSeq" id="NP_001318736.1">
    <molecule id="Q8W4J9-1"/>
    <property type="nucleotide sequence ID" value="NM_001344485.1"/>
</dbReference>
<dbReference type="RefSeq" id="NP_001332592.1">
    <molecule id="Q8W4J9-1"/>
    <property type="nucleotide sequence ID" value="NM_001344486.1"/>
</dbReference>
<dbReference type="RefSeq" id="NP_199160.1">
    <molecule id="Q8W4J9-1"/>
    <property type="nucleotide sequence ID" value="NM_123713.4"/>
</dbReference>
<dbReference type="RefSeq" id="NP_851124.1">
    <molecule id="Q8W4J9-1"/>
    <property type="nucleotide sequence ID" value="NM_180793.1"/>
</dbReference>
<dbReference type="SMR" id="Q8W4J9"/>
<dbReference type="BioGRID" id="19617">
    <property type="interactions" value="8"/>
</dbReference>
<dbReference type="DIP" id="DIP-59355N"/>
<dbReference type="FunCoup" id="Q8W4J9">
    <property type="interactions" value="183"/>
</dbReference>
<dbReference type="IntAct" id="Q8W4J9">
    <property type="interactions" value="2"/>
</dbReference>
<dbReference type="STRING" id="3702.Q8W4J9"/>
<dbReference type="iPTMnet" id="Q8W4J9"/>
<dbReference type="PaxDb" id="3702-AT5G43470.2"/>
<dbReference type="ProteomicsDB" id="226905">
    <molecule id="Q8W4J9-1"/>
</dbReference>
<dbReference type="EnsemblPlants" id="AT5G43470.1">
    <molecule id="Q8W4J9-1"/>
    <property type="protein sequence ID" value="AT5G43470.1"/>
    <property type="gene ID" value="AT5G43470"/>
</dbReference>
<dbReference type="EnsemblPlants" id="AT5G43470.2">
    <molecule id="Q8W4J9-1"/>
    <property type="protein sequence ID" value="AT5G43470.2"/>
    <property type="gene ID" value="AT5G43470"/>
</dbReference>
<dbReference type="EnsemblPlants" id="AT5G43470.3">
    <molecule id="Q8W4J9-1"/>
    <property type="protein sequence ID" value="AT5G43470.3"/>
    <property type="gene ID" value="AT5G43470"/>
</dbReference>
<dbReference type="EnsemblPlants" id="AT5G43470.4">
    <molecule id="Q8W4J9-1"/>
    <property type="protein sequence ID" value="AT5G43470.4"/>
    <property type="gene ID" value="AT5G43470"/>
</dbReference>
<dbReference type="GeneID" id="834367"/>
<dbReference type="Gramene" id="AT5G43470.1">
    <molecule id="Q8W4J9-1"/>
    <property type="protein sequence ID" value="AT5G43470.1"/>
    <property type="gene ID" value="AT5G43470"/>
</dbReference>
<dbReference type="Gramene" id="AT5G43470.2">
    <molecule id="Q8W4J9-1"/>
    <property type="protein sequence ID" value="AT5G43470.2"/>
    <property type="gene ID" value="AT5G43470"/>
</dbReference>
<dbReference type="Gramene" id="AT5G43470.3">
    <molecule id="Q8W4J9-1"/>
    <property type="protein sequence ID" value="AT5G43470.3"/>
    <property type="gene ID" value="AT5G43470"/>
</dbReference>
<dbReference type="Gramene" id="AT5G43470.4">
    <molecule id="Q8W4J9-1"/>
    <property type="protein sequence ID" value="AT5G43470.4"/>
    <property type="gene ID" value="AT5G43470"/>
</dbReference>
<dbReference type="KEGG" id="ath:AT5G43470"/>
<dbReference type="Araport" id="AT5G43470"/>
<dbReference type="TAIR" id="AT5G43470">
    <property type="gene designation" value="RPP8"/>
</dbReference>
<dbReference type="eggNOG" id="KOG4658">
    <property type="taxonomic scope" value="Eukaryota"/>
</dbReference>
<dbReference type="HOGENOM" id="CLU_000837_25_4_1"/>
<dbReference type="InParanoid" id="Q8W4J9"/>
<dbReference type="OMA" id="DLGMYIK"/>
<dbReference type="PhylomeDB" id="Q8W4J9"/>
<dbReference type="PRO" id="PR:Q8W4J9"/>
<dbReference type="Proteomes" id="UP000006548">
    <property type="component" value="Chromosome 5"/>
</dbReference>
<dbReference type="ExpressionAtlas" id="Q8W4J9">
    <property type="expression patterns" value="baseline and differential"/>
</dbReference>
<dbReference type="GO" id="GO:0005886">
    <property type="term" value="C:plasma membrane"/>
    <property type="evidence" value="ECO:0000314"/>
    <property type="project" value="UniProtKB"/>
</dbReference>
<dbReference type="GO" id="GO:0009536">
    <property type="term" value="C:plastid"/>
    <property type="evidence" value="ECO:0007005"/>
    <property type="project" value="TAIR"/>
</dbReference>
<dbReference type="GO" id="GO:0043531">
    <property type="term" value="F:ADP binding"/>
    <property type="evidence" value="ECO:0007669"/>
    <property type="project" value="InterPro"/>
</dbReference>
<dbReference type="GO" id="GO:0005524">
    <property type="term" value="F:ATP binding"/>
    <property type="evidence" value="ECO:0007669"/>
    <property type="project" value="UniProtKB-KW"/>
</dbReference>
<dbReference type="GO" id="GO:0000166">
    <property type="term" value="F:nucleotide binding"/>
    <property type="evidence" value="ECO:0000250"/>
    <property type="project" value="TAIR"/>
</dbReference>
<dbReference type="GO" id="GO:0071446">
    <property type="term" value="P:cellular response to salicylic acid stimulus"/>
    <property type="evidence" value="ECO:0000270"/>
    <property type="project" value="UniProtKB"/>
</dbReference>
<dbReference type="GO" id="GO:0006952">
    <property type="term" value="P:defense response"/>
    <property type="evidence" value="ECO:0000304"/>
    <property type="project" value="TAIR"/>
</dbReference>
<dbReference type="GO" id="GO:0051607">
    <property type="term" value="P:defense response to virus"/>
    <property type="evidence" value="ECO:0000315"/>
    <property type="project" value="UniProtKB"/>
</dbReference>
<dbReference type="GO" id="GO:0009626">
    <property type="term" value="P:plant-type hypersensitive response"/>
    <property type="evidence" value="ECO:0000315"/>
    <property type="project" value="TAIR"/>
</dbReference>
<dbReference type="GO" id="GO:0002230">
    <property type="term" value="P:positive regulation of defense response to virus by host"/>
    <property type="evidence" value="ECO:0000314"/>
    <property type="project" value="UniProtKB"/>
</dbReference>
<dbReference type="GO" id="GO:0009646">
    <property type="term" value="P:response to absence of light"/>
    <property type="evidence" value="ECO:0000270"/>
    <property type="project" value="UniProtKB"/>
</dbReference>
<dbReference type="GO" id="GO:0009637">
    <property type="term" value="P:response to blue light"/>
    <property type="evidence" value="ECO:0000270"/>
    <property type="project" value="UniProtKB"/>
</dbReference>
<dbReference type="GO" id="GO:0009416">
    <property type="term" value="P:response to light stimulus"/>
    <property type="evidence" value="ECO:0000315"/>
    <property type="project" value="TAIR"/>
</dbReference>
<dbReference type="GO" id="GO:0002239">
    <property type="term" value="P:response to oomycetes"/>
    <property type="evidence" value="ECO:0000270"/>
    <property type="project" value="UniProtKB"/>
</dbReference>
<dbReference type="GO" id="GO:0051707">
    <property type="term" value="P:response to other organism"/>
    <property type="evidence" value="ECO:0000315"/>
    <property type="project" value="TAIR"/>
</dbReference>
<dbReference type="GO" id="GO:0009751">
    <property type="term" value="P:response to salicylic acid"/>
    <property type="evidence" value="ECO:0000270"/>
    <property type="project" value="UniProtKB"/>
</dbReference>
<dbReference type="GO" id="GO:0009611">
    <property type="term" value="P:response to wounding"/>
    <property type="evidence" value="ECO:0000270"/>
    <property type="project" value="UniProtKB"/>
</dbReference>
<dbReference type="CDD" id="cd14798">
    <property type="entry name" value="RX-CC_like"/>
    <property type="match status" value="1"/>
</dbReference>
<dbReference type="FunFam" id="1.20.5.4130:FF:000002">
    <property type="entry name" value="Disease resistance protein RPP8"/>
    <property type="match status" value="1"/>
</dbReference>
<dbReference type="FunFam" id="3.80.10.10:FF:000940">
    <property type="entry name" value="Disease resistance RPP8-like protein 3"/>
    <property type="match status" value="1"/>
</dbReference>
<dbReference type="FunFam" id="3.40.50.300:FF:001091">
    <property type="entry name" value="Probable disease resistance protein At1g61300"/>
    <property type="match status" value="1"/>
</dbReference>
<dbReference type="FunFam" id="1.10.10.10:FF:000322">
    <property type="entry name" value="Probable disease resistance protein At1g63360"/>
    <property type="match status" value="1"/>
</dbReference>
<dbReference type="FunFam" id="1.10.8.430:FF:000003">
    <property type="entry name" value="Probable disease resistance protein At5g66910"/>
    <property type="match status" value="1"/>
</dbReference>
<dbReference type="Gene3D" id="1.20.5.4130">
    <property type="match status" value="1"/>
</dbReference>
<dbReference type="Gene3D" id="1.10.8.430">
    <property type="entry name" value="Helical domain of apoptotic protease-activating factors"/>
    <property type="match status" value="1"/>
</dbReference>
<dbReference type="Gene3D" id="3.40.50.300">
    <property type="entry name" value="P-loop containing nucleotide triphosphate hydrolases"/>
    <property type="match status" value="1"/>
</dbReference>
<dbReference type="Gene3D" id="3.80.10.10">
    <property type="entry name" value="Ribonuclease Inhibitor"/>
    <property type="match status" value="2"/>
</dbReference>
<dbReference type="Gene3D" id="1.10.10.10">
    <property type="entry name" value="Winged helix-like DNA-binding domain superfamily/Winged helix DNA-binding domain"/>
    <property type="match status" value="1"/>
</dbReference>
<dbReference type="InterPro" id="IPR042197">
    <property type="entry name" value="Apaf_helical"/>
</dbReference>
<dbReference type="InterPro" id="IPR032675">
    <property type="entry name" value="LRR_dom_sf"/>
</dbReference>
<dbReference type="InterPro" id="IPR055414">
    <property type="entry name" value="LRR_R13L4/SHOC2-like"/>
</dbReference>
<dbReference type="InterPro" id="IPR002182">
    <property type="entry name" value="NB-ARC"/>
</dbReference>
<dbReference type="InterPro" id="IPR027417">
    <property type="entry name" value="P-loop_NTPase"/>
</dbReference>
<dbReference type="InterPro" id="IPR038005">
    <property type="entry name" value="RX-like_CC"/>
</dbReference>
<dbReference type="InterPro" id="IPR041118">
    <property type="entry name" value="Rx_N"/>
</dbReference>
<dbReference type="InterPro" id="IPR036388">
    <property type="entry name" value="WH-like_DNA-bd_sf"/>
</dbReference>
<dbReference type="PANTHER" id="PTHR36766:SF40">
    <property type="entry name" value="DISEASE RESISTANCE PROTEIN RGA3"/>
    <property type="match status" value="1"/>
</dbReference>
<dbReference type="PANTHER" id="PTHR36766">
    <property type="entry name" value="PLANT BROAD-SPECTRUM MILDEW RESISTANCE PROTEIN RPW8"/>
    <property type="match status" value="1"/>
</dbReference>
<dbReference type="Pfam" id="PF23598">
    <property type="entry name" value="LRR_14"/>
    <property type="match status" value="1"/>
</dbReference>
<dbReference type="Pfam" id="PF00931">
    <property type="entry name" value="NB-ARC"/>
    <property type="match status" value="1"/>
</dbReference>
<dbReference type="Pfam" id="PF18052">
    <property type="entry name" value="Rx_N"/>
    <property type="match status" value="1"/>
</dbReference>
<dbReference type="Pfam" id="PF23559">
    <property type="entry name" value="WH_DRP"/>
    <property type="match status" value="1"/>
</dbReference>
<dbReference type="PRINTS" id="PR00364">
    <property type="entry name" value="DISEASERSIST"/>
</dbReference>
<dbReference type="SUPFAM" id="SSF52058">
    <property type="entry name" value="L domain-like"/>
    <property type="match status" value="1"/>
</dbReference>
<dbReference type="SUPFAM" id="SSF52540">
    <property type="entry name" value="P-loop containing nucleoside triphosphate hydrolases"/>
    <property type="match status" value="1"/>
</dbReference>
<feature type="chain" id="PRO_0000212719" description="Disease resistance protein RPP8">
    <location>
        <begin position="1"/>
        <end position="908"/>
    </location>
</feature>
<feature type="domain" description="NB-ARC" evidence="1">
    <location>
        <begin position="146"/>
        <end position="459"/>
    </location>
</feature>
<feature type="repeat" description="LRR 1" evidence="1">
    <location>
        <begin position="575"/>
        <end position="600"/>
    </location>
</feature>
<feature type="repeat" description="LRR 2" evidence="1">
    <location>
        <begin position="601"/>
        <end position="623"/>
    </location>
</feature>
<feature type="repeat" description="LRR 3" evidence="1">
    <location>
        <begin position="648"/>
        <end position="673"/>
    </location>
</feature>
<feature type="repeat" description="LRR 4" evidence="1">
    <location>
        <begin position="693"/>
        <end position="718"/>
    </location>
</feature>
<feature type="repeat" description="LRR 5" evidence="1">
    <location>
        <begin position="722"/>
        <end position="746"/>
    </location>
</feature>
<feature type="repeat" description="LRR 6" evidence="1">
    <location>
        <begin position="748"/>
        <end position="770"/>
    </location>
</feature>
<feature type="repeat" description="LRR 7" evidence="1">
    <location>
        <begin position="793"/>
        <end position="820"/>
    </location>
</feature>
<feature type="repeat" description="LRR 8" evidence="1">
    <location>
        <begin position="842"/>
        <end position="867"/>
    </location>
</feature>
<feature type="repeat" description="LRR 9" evidence="1">
    <location>
        <begin position="882"/>
        <end position="905"/>
    </location>
</feature>
<feature type="coiled-coil region" evidence="1">
    <location>
        <begin position="15"/>
        <end position="57"/>
    </location>
</feature>
<feature type="binding site" evidence="1">
    <location>
        <begin position="192"/>
        <end position="199"/>
    </location>
    <ligand>
        <name>ATP</name>
        <dbReference type="ChEBI" id="CHEBI:30616"/>
    </ligand>
</feature>
<feature type="splice variant" id="VSP_007171" description="In isoform 2." evidence="10">
    <original>WKMLLTSRNEGVGIH</original>
    <variation>ELLWYIHEALFLLNS</variation>
    <location>
        <begin position="294"/>
        <end position="308"/>
    </location>
</feature>
<feature type="splice variant" id="VSP_007172" description="In isoform 2." evidence="10">
    <location>
        <begin position="309"/>
        <end position="908"/>
    </location>
</feature>
<feature type="sequence variant" description="In strain: cv. Landsberg erecta." evidence="9">
    <original>IDGQL</original>
    <variation>VDEQI</variation>
    <location>
        <begin position="27"/>
        <end position="31"/>
    </location>
</feature>
<feature type="sequence variant" description="In strain: cv. Di-17." evidence="2">
    <original>G</original>
    <variation>E</variation>
    <location>
        <position position="29"/>
    </location>
</feature>
<feature type="sequence variant" description="In strain: cv. Di-17 and cv. Landsberg erecta." evidence="2 9">
    <original>SGK</original>
    <variation>RGE</variation>
    <location>
        <begin position="85"/>
        <end position="87"/>
    </location>
</feature>
<feature type="sequence variant" description="In strain: cv. Landsberg erecta." evidence="9">
    <original>GKGV</original>
    <variation>EKGI</variation>
    <location>
        <begin position="88"/>
        <end position="91"/>
    </location>
</feature>
<feature type="sequence variant" description="In strain: cv. Landsberg erecta." evidence="9">
    <original>C</original>
    <variation>R</variation>
    <location>
        <position position="100"/>
    </location>
</feature>
<feature type="sequence variant" description="In strain: cv. Landsberg erecta." evidence="9">
    <original>E</original>
    <variation>D</variation>
    <location>
        <position position="121"/>
    </location>
</feature>
<feature type="sequence variant" description="In strain: cv. Di-17." evidence="2">
    <original>F</original>
    <variation>L</variation>
    <location>
        <position position="129"/>
    </location>
</feature>
<feature type="sequence variant" description="In strain: cv. Di-17." evidence="2">
    <original>Q</original>
    <variation>QQ</variation>
    <location>
        <position position="133"/>
    </location>
</feature>
<feature type="sequence variant" description="In strain: cv. Landsberg erecta." evidence="9">
    <original>G</original>
    <variation>V</variation>
    <location>
        <position position="138"/>
    </location>
</feature>
<feature type="sequence variant" description="In strain: cv. Di-17." evidence="2">
    <original>K</original>
    <variation>T</variation>
    <location>
        <position position="173"/>
    </location>
</feature>
<feature type="sequence variant" description="In strain: cv. Di-17." evidence="2">
    <original>G</original>
    <variation>C</variation>
    <location>
        <position position="177"/>
    </location>
</feature>
<feature type="sequence variant" description="In strain: cv. Di-17." evidence="2">
    <original>Y</original>
    <variation>S</variation>
    <location>
        <position position="253"/>
    </location>
</feature>
<feature type="sequence variant" description="In strain: cv. Di-17." evidence="2">
    <original>R</original>
    <variation>P</variation>
    <location>
        <position position="257"/>
    </location>
</feature>
<feature type="sequence variant" description="In strain: cv. Di-17." evidence="2">
    <original>A</original>
    <variation>T</variation>
    <location>
        <position position="265"/>
    </location>
</feature>
<feature type="sequence variant" description="In strain: cv. Landsberg erecta." evidence="9">
    <original>R</original>
    <variation>K</variation>
    <location>
        <position position="267"/>
    </location>
</feature>
<feature type="sequence variant" description="In strain: cv. Di-17." evidence="2">
    <original>V</original>
    <variation>L</variation>
    <location>
        <position position="270"/>
    </location>
</feature>
<feature type="sequence variant" description="In strain: cv. Di-17." evidence="2">
    <original>V</original>
    <variation>R</variation>
    <location>
        <position position="283"/>
    </location>
</feature>
<feature type="sequence variant" description="In strain: cv. Di-17 and cv. Landsberg erecta." evidence="2 9">
    <original>A</original>
    <variation>V</variation>
    <location>
        <position position="369"/>
    </location>
</feature>
<feature type="sequence variant" description="In strain: cv. Di-17 and cv. Landsberg erecta." evidence="2 9">
    <original>F</original>
    <variation>S</variation>
    <location>
        <position position="387"/>
    </location>
</feature>
<feature type="sequence variant" description="In strain: cv. Di-17 and cv. Landsberg erecta." evidence="2 9">
    <original>W</original>
    <variation>C</variation>
    <location>
        <position position="399"/>
    </location>
</feature>
<feature type="sequence variant" description="In strain: cv. Di-17 and cv. Landsberg erecta." evidence="2 9">
    <original>C</original>
    <variation>R</variation>
    <location>
        <position position="426"/>
    </location>
</feature>
<feature type="sequence variant" description="In strain: cv. Di-17 and cv. Landsberg erecta." evidence="2 9">
    <original>N</original>
    <variation>F</variation>
    <location>
        <position position="429"/>
    </location>
</feature>
<feature type="sequence variant" description="In strain: cv. Landsberg erecta." evidence="9">
    <original>DSEISTYSLFY</original>
    <variation>YSKISAYDLFN</variation>
    <location>
        <begin position="436"/>
        <end position="446"/>
    </location>
</feature>
<feature type="sequence variant" description="In strain: cv. Di-17." evidence="2">
    <original>EISTYS</original>
    <variation>KITTQE</variation>
    <location>
        <begin position="438"/>
        <end position="443"/>
    </location>
</feature>
<feature type="sequence variant" description="In strain: cv. Landsberg erecta." evidence="9">
    <original>A</original>
    <variation>V</variation>
    <location>
        <position position="450"/>
    </location>
</feature>
<feature type="sequence variant" description="In strain: cv. Landsberg erecta." evidence="9">
    <original>E</original>
    <variation>Q</variation>
    <location>
        <position position="460"/>
    </location>
</feature>
<feature type="sequence variant" description="In strain: cv. Di-17." evidence="2">
    <original>DNYLSWQ</original>
    <variation>NKYLRVH</variation>
    <location>
        <begin position="480"/>
        <end position="486"/>
    </location>
</feature>
<feature type="sequence variant" description="In strain: cv. Landsberg erecta." evidence="9">
    <original>DN</original>
    <variation>NR</variation>
    <location>
        <begin position="480"/>
        <end position="481"/>
    </location>
</feature>
<feature type="sequence variant" description="In strain: cv. Landsberg erecta." evidence="9">
    <original>WQ</original>
    <variation>SH</variation>
    <location>
        <begin position="485"/>
        <end position="486"/>
    </location>
</feature>
<feature type="sequence variant" description="In strain: cv. Landsberg erecta." evidence="9">
    <original>Y</original>
    <variation>N</variation>
    <location>
        <position position="489"/>
    </location>
</feature>
<feature type="sequence variant" description="In strain: cv. Di-17 and cv. Landsberg erecta." evidence="2 9">
    <original>I</original>
    <variation>K</variation>
    <location>
        <position position="514"/>
    </location>
</feature>
<feature type="sequence variant" description="In strain: cv. Di-17 and cv. Landsberg erecta." evidence="2 9">
    <original>C</original>
    <variation>S</variation>
    <location>
        <position position="518"/>
    </location>
</feature>
<feature type="sequence variant" description="In strain: cv. Di-17." evidence="2">
    <original>T</original>
    <variation>I</variation>
    <location>
        <position position="519"/>
    </location>
</feature>
<feature type="sequence variant" description="In strain: cv. Di-17." evidence="2">
    <original>S</original>
    <variation>R</variation>
    <location>
        <position position="528"/>
    </location>
</feature>
<feature type="sequence variant" description="In strain: cv. Di-17." evidence="2">
    <original>S</original>
    <variation>R</variation>
    <location>
        <position position="537"/>
    </location>
</feature>
<feature type="sequence variant" description="In strain: cv. Di-17." evidence="2">
    <original>H</original>
    <variation>Q</variation>
    <location>
        <position position="542"/>
    </location>
</feature>
<feature type="sequence variant" description="In strain: cv. Landsberg erecta." evidence="9">
    <original>I</original>
    <variation>L</variation>
    <location>
        <position position="543"/>
    </location>
</feature>
<feature type="sequence variant" description="In strain: cv. Di-17." evidence="2">
    <original>KNKT</original>
    <variation>RNNA</variation>
    <location>
        <begin position="547"/>
        <end position="550"/>
    </location>
</feature>
<feature type="sequence variant" description="In strain: cv. Landsberg erecta." evidence="9">
    <original>K</original>
    <variation>N</variation>
    <location>
        <position position="549"/>
    </location>
</feature>
<feature type="sequence variant" description="In strain: cv. Landsberg erecta." evidence="9">
    <original>PRFEEDYW</original>
    <variation>WDEDFG</variation>
    <location>
        <begin position="558"/>
        <end position="565"/>
    </location>
</feature>
<feature type="sequence variant" description="In strain: cv. Di-17." evidence="2">
    <original>PRF</original>
    <variation>SRFK</variation>
    <location>
        <begin position="558"/>
        <end position="560"/>
    </location>
</feature>
<feature type="sequence variant" description="In strain: cv. Di-17." evidence="2">
    <original>Y</original>
    <variation>F</variation>
    <location>
        <position position="564"/>
    </location>
</feature>
<feature type="sequence variant" description="In strain: cv. Landsberg erecta." evidence="9">
    <original>S</original>
    <variation>Y</variation>
    <location>
        <position position="584"/>
    </location>
</feature>
<feature type="sequence variant" description="In strain: cv. Di-17 and cv. Landsberg erecta." evidence="2 9">
    <original>C</original>
    <variation>S</variation>
    <location>
        <position position="595"/>
    </location>
</feature>
<feature type="sequence variant" description="In strain: cv. Landsberg erecta." evidence="9">
    <original>YEAK</original>
    <variation>FLAG</variation>
    <location>
        <begin position="609"/>
        <end position="612"/>
    </location>
</feature>
<feature type="sequence variant" description="In strain: cv. Di-17." evidence="2">
    <original>NLRVDT</original>
    <variation>DLSVHE</variation>
    <location>
        <begin position="630"/>
        <end position="635"/>
    </location>
</feature>
<feature type="sequence variant" description="In strain: cv. Landsberg erecta." evidence="9">
    <original>RVDTE</original>
    <variation>SVNNK</variation>
    <location>
        <begin position="632"/>
        <end position="636"/>
    </location>
</feature>
<feature type="sequence variant" description="In strain: cv. Di-17." evidence="2">
    <original>Q</original>
    <variation>E</variation>
    <location>
        <position position="650"/>
    </location>
</feature>
<feature type="sequence variant" description="In strain: cv. Di-17." evidence="2">
    <original>YL</original>
    <variation>HI</variation>
    <location>
        <begin position="653"/>
        <end position="654"/>
    </location>
</feature>
<feature type="sequence variant" description="In strain: cv. Di-17." evidence="2">
    <location>
        <position position="659"/>
    </location>
</feature>
<feature type="sequence variant" description="In strain: cv. Landsberg erecta." evidence="9">
    <original>M</original>
    <variation>K</variation>
    <location>
        <position position="660"/>
    </location>
</feature>
<feature type="sequence variant" description="In strain: cv. Landsberg erecta." evidence="9">
    <original>YLY</original>
    <variation>FLF</variation>
    <location>
        <begin position="676"/>
        <end position="678"/>
    </location>
</feature>
<feature type="sequence variant" description="In strain: cv. Di-17." evidence="2">
    <original>YG</original>
    <variation>FR</variation>
    <location>
        <begin position="678"/>
        <end position="679"/>
    </location>
</feature>
<feature type="sequence variant" description="In strain: cv. Landsberg erecta." evidence="9">
    <original>R</original>
    <variation>H</variation>
    <location>
        <position position="692"/>
    </location>
</feature>
<feature type="sequence variant" description="In strain: cv. Di-17." evidence="2">
    <original>R</original>
    <variation>Q</variation>
    <location>
        <position position="697"/>
    </location>
</feature>
<feature type="sequence variant" description="In strain: cv. Di-17." evidence="2">
    <original>A</original>
    <variation>G</variation>
    <location>
        <position position="700"/>
    </location>
</feature>
<feature type="sequence variant" description="In strain: cv. Di-17." evidence="2">
    <original>T</original>
    <variation>S</variation>
    <location>
        <position position="724"/>
    </location>
</feature>
<feature type="sequence variant" description="In strain: cv. Landsberg erecta." evidence="9">
    <original>NF</original>
    <variation>YV</variation>
    <location>
        <begin position="726"/>
        <end position="727"/>
    </location>
</feature>
<feature type="sequence variant" description="In strain: cv. Di-17." evidence="2">
    <original>SL</original>
    <variation>TP</variation>
    <location>
        <begin position="730"/>
        <end position="731"/>
    </location>
</feature>
<feature type="sequence variant" description="In strain: cv. Landsberg erecta." evidence="9">
    <original>LETY</original>
    <variation>PEIF</variation>
    <location>
        <begin position="731"/>
        <end position="734"/>
    </location>
</feature>
<feature type="sequence variant" description="In strain: cv. Di-17 and cv. Landsberg erecta." evidence="2 9">
    <original>Q</original>
    <variation>E</variation>
    <location>
        <position position="752"/>
    </location>
</feature>
<feature type="sequence variant" description="In strain: cv. Landsberg erecta." evidence="9">
    <original>F</original>
    <variation>L</variation>
    <location>
        <position position="768"/>
    </location>
</feature>
<feature type="sequence variant" description="In strain: cv. Landsberg erecta." evidence="9">
    <original>VHLFLIYCG</original>
    <variation>AQIYICNCR</variation>
    <location>
        <begin position="773"/>
        <end position="781"/>
    </location>
</feature>
<feature type="sequence variant" description="In strain: cv. Di-17." evidence="2">
    <original>VHLFLIYCG</original>
    <variation>THIHLLFCR</variation>
    <location>
        <begin position="773"/>
        <end position="781"/>
    </location>
</feature>
<feature type="sequence variant" description="In strain: cv. Di-17." evidence="2">
    <original>RLARKAFL</original>
    <variation>QLTDEAFV</variation>
    <location>
        <begin position="800"/>
        <end position="807"/>
    </location>
</feature>
<feature type="sequence variant" description="In strain: cv. Landsberg erecta." evidence="9">
    <original>RLAR</original>
    <variation>KLTF</variation>
    <location>
        <begin position="800"/>
        <end position="803"/>
    </location>
</feature>
<feature type="sequence variant" description="In strain: cv. Landsberg erecta." evidence="9">
    <original>LGS</original>
    <variation>AGR</variation>
    <location>
        <begin position="807"/>
        <end position="809"/>
    </location>
</feature>
<feature type="sequence variant" description="In strain: cv. Landsberg erecta." evidence="9">
    <original>P</original>
    <variation>T</variation>
    <location>
        <position position="819"/>
    </location>
</feature>
<feature type="sequence variant" description="In strain: cv. Di-17 and cv. Landsberg erecta." evidence="2 9">
    <original>VI</original>
    <variation>AL</variation>
    <location>
        <begin position="823"/>
        <end position="824"/>
    </location>
</feature>
<feature type="sequence variant" description="In strain: cv. Di-17." evidence="2">
    <original>E</original>
    <variation>D</variation>
    <location>
        <position position="825"/>
    </location>
</feature>
<feature type="sequence variant" description="In strain: cv. Landsberg erecta." evidence="9">
    <original>KE</original>
    <variation>EQ</variation>
    <location>
        <begin position="828"/>
        <end position="829"/>
    </location>
</feature>
<feature type="sequence variant" description="In strain: cv. Di-17 and cv. Landsberg erecta." evidence="2 9">
    <original>D</original>
    <variation>H</variation>
    <location>
        <position position="851"/>
    </location>
</feature>
<feature type="sequence variant" description="In strain: cv. Di-17 and cv. Landsberg erecta." evidence="2 9">
    <original>K</original>
    <variation>E</variation>
    <location>
        <position position="854"/>
    </location>
</feature>
<feature type="mutagenesis site" description="In rpp8-1; loss of function." evidence="9">
    <original>D</original>
    <variation>N</variation>
    <location>
        <position position="418"/>
    </location>
</feature>
<feature type="mutagenesis site" description="In rpp8-2; loss of function." evidence="9">
    <original>R</original>
    <variation>K</variation>
    <location>
        <position position="553"/>
    </location>
</feature>
<feature type="mutagenesis site" description="In rpp8-1; loss of function." evidence="9">
    <original>S</original>
    <variation>L</variation>
    <location>
        <position position="830"/>
    </location>
</feature>
<feature type="sequence conflict" description="In Ref. 6; AAL32592." evidence="11" ref="6">
    <original>K</original>
    <variation>R</variation>
    <location>
        <position position="83"/>
    </location>
</feature>
<feature type="sequence conflict" description="In Ref. 6; AAL32592." evidence="11" ref="6">
    <original>S</original>
    <variation>G</variation>
    <location>
        <position position="686"/>
    </location>
</feature>
<feature type="sequence conflict" description="In Ref. 6; AAL32592." evidence="11" ref="6">
    <original>W</original>
    <variation>R</variation>
    <location>
        <position position="835"/>
    </location>
</feature>
<keyword id="KW-0025">Alternative splicing</keyword>
<keyword id="KW-0067">ATP-binding</keyword>
<keyword id="KW-1003">Cell membrane</keyword>
<keyword id="KW-0175">Coiled coil</keyword>
<keyword id="KW-0381">Hypersensitive response</keyword>
<keyword id="KW-0433">Leucine-rich repeat</keyword>
<keyword id="KW-0472">Membrane</keyword>
<keyword id="KW-0547">Nucleotide-binding</keyword>
<keyword id="KW-0611">Plant defense</keyword>
<keyword id="KW-1185">Reference proteome</keyword>
<keyword id="KW-0677">Repeat</keyword>
<accession>Q8W4J9</accession>
<accession>Q8GWG5</accession>
<accession>Q9M5A1</accession>
<accession>Q9ZSY3</accession>
<accession>Q9ZSY4</accession>
<name>RPP8_ARATH</name>
<proteinExistence type="evidence at protein level"/>
<evidence type="ECO:0000255" key="1"/>
<evidence type="ECO:0000269" key="2">
    <source>
    </source>
</evidence>
<evidence type="ECO:0000269" key="3">
    <source>
    </source>
</evidence>
<evidence type="ECO:0000269" key="4">
    <source>
    </source>
</evidence>
<evidence type="ECO:0000269" key="5">
    <source>
    </source>
</evidence>
<evidence type="ECO:0000269" key="6">
    <source>
    </source>
</evidence>
<evidence type="ECO:0000269" key="7">
    <source>
    </source>
</evidence>
<evidence type="ECO:0000269" key="8">
    <source>
    </source>
</evidence>
<evidence type="ECO:0000269" key="9">
    <source>
    </source>
</evidence>
<evidence type="ECO:0000303" key="10">
    <source>
    </source>
</evidence>
<evidence type="ECO:0000305" key="11"/>
<reference key="1">
    <citation type="journal article" date="1998" name="Plant Cell">
        <title>Intragenic recombination and diversifying selection contribute to the evolution of downy mildew resistance at the RPP8 locus of Arabidopsis.</title>
        <authorList>
            <person name="McDowell J.M."/>
            <person name="Dhandaydham M."/>
            <person name="Long T.A."/>
            <person name="Aarts M.G.M."/>
            <person name="Goff S."/>
            <person name="Holub E.B."/>
            <person name="Dangl J.L."/>
        </authorList>
    </citation>
    <scope>NUCLEOTIDE SEQUENCE [GENOMIC DNA]</scope>
    <scope>FUNCTION</scope>
    <scope>MUTANTS RPP8-1; RPP8-2 AND RPP8-3</scope>
    <scope>VARIANTS</scope>
    <source>
        <strain>cv. Columbia</strain>
        <strain>cv. Landsberg erecta</strain>
    </source>
</reference>
<reference key="2">
    <citation type="journal article" date="2000" name="Plant Cell">
        <title>Members of the Arabidopsis HRT/RPP8 family of resistance genes confer resistance to both viral and oomycete pathogens.</title>
        <authorList>
            <person name="Cooley M.B."/>
            <person name="Pathirana S."/>
            <person name="Wu H.-J."/>
            <person name="Kachroo P."/>
            <person name="Klessig D.F."/>
        </authorList>
    </citation>
    <scope>NUCLEOTIDE SEQUENCE [GENOMIC DNA]</scope>
    <scope>VARIANTS</scope>
    <source>
        <strain>cv. Di-17</strain>
    </source>
</reference>
<reference key="3">
    <citation type="journal article" date="2000" name="DNA Res.">
        <title>Structural analysis of Arabidopsis thaliana chromosome 5. X. Sequence features of the regions of 3,076,755 bp covered by sixty P1 and TAC clones.</title>
        <authorList>
            <person name="Sato S."/>
            <person name="Nakamura Y."/>
            <person name="Kaneko T."/>
            <person name="Katoh T."/>
            <person name="Asamizu E."/>
            <person name="Kotani H."/>
            <person name="Tabata S."/>
        </authorList>
    </citation>
    <scope>NUCLEOTIDE SEQUENCE [LARGE SCALE GENOMIC DNA]</scope>
    <source>
        <strain>cv. Columbia</strain>
    </source>
</reference>
<reference key="4">
    <citation type="journal article" date="2017" name="Plant J.">
        <title>Araport11: a complete reannotation of the Arabidopsis thaliana reference genome.</title>
        <authorList>
            <person name="Cheng C.Y."/>
            <person name="Krishnakumar V."/>
            <person name="Chan A.P."/>
            <person name="Thibaud-Nissen F."/>
            <person name="Schobel S."/>
            <person name="Town C.D."/>
        </authorList>
    </citation>
    <scope>GENOME REANNOTATION</scope>
    <source>
        <strain>cv. Columbia</strain>
    </source>
</reference>
<reference key="5">
    <citation type="journal article" date="2002" name="Science">
        <title>Functional annotation of a full-length Arabidopsis cDNA collection.</title>
        <authorList>
            <person name="Seki M."/>
            <person name="Narusaka M."/>
            <person name="Kamiya A."/>
            <person name="Ishida J."/>
            <person name="Satou M."/>
            <person name="Sakurai T."/>
            <person name="Nakajima M."/>
            <person name="Enju A."/>
            <person name="Akiyama K."/>
            <person name="Oono Y."/>
            <person name="Muramatsu M."/>
            <person name="Hayashizaki Y."/>
            <person name="Kawai J."/>
            <person name="Carninci P."/>
            <person name="Itoh M."/>
            <person name="Ishii Y."/>
            <person name="Arakawa T."/>
            <person name="Shibata K."/>
            <person name="Shinagawa A."/>
            <person name="Shinozaki K."/>
        </authorList>
    </citation>
    <scope>NUCLEOTIDE SEQUENCE [LARGE SCALE MRNA] (ISOFORM 2)</scope>
    <source>
        <strain>cv. Columbia</strain>
    </source>
</reference>
<reference key="6">
    <citation type="journal article" date="2003" name="Science">
        <title>Empirical analysis of transcriptional activity in the Arabidopsis genome.</title>
        <authorList>
            <person name="Yamada K."/>
            <person name="Lim J."/>
            <person name="Dale J.M."/>
            <person name="Chen H."/>
            <person name="Shinn P."/>
            <person name="Palm C.J."/>
            <person name="Southwick A.M."/>
            <person name="Wu H.C."/>
            <person name="Kim C.J."/>
            <person name="Nguyen M."/>
            <person name="Pham P.K."/>
            <person name="Cheuk R.F."/>
            <person name="Karlin-Newmann G."/>
            <person name="Liu S.X."/>
            <person name="Lam B."/>
            <person name="Sakano H."/>
            <person name="Wu T."/>
            <person name="Yu G."/>
            <person name="Miranda M."/>
            <person name="Quach H.L."/>
            <person name="Tripp M."/>
            <person name="Chang C.H."/>
            <person name="Lee J.M."/>
            <person name="Toriumi M.J."/>
            <person name="Chan M.M."/>
            <person name="Tang C.C."/>
            <person name="Onodera C.S."/>
            <person name="Deng J.M."/>
            <person name="Akiyama K."/>
            <person name="Ansari Y."/>
            <person name="Arakawa T."/>
            <person name="Banh J."/>
            <person name="Banno F."/>
            <person name="Bowser L."/>
            <person name="Brooks S.Y."/>
            <person name="Carninci P."/>
            <person name="Chao Q."/>
            <person name="Choy N."/>
            <person name="Enju A."/>
            <person name="Goldsmith A.D."/>
            <person name="Gurjal M."/>
            <person name="Hansen N.F."/>
            <person name="Hayashizaki Y."/>
            <person name="Johnson-Hopson C."/>
            <person name="Hsuan V.W."/>
            <person name="Iida K."/>
            <person name="Karnes M."/>
            <person name="Khan S."/>
            <person name="Koesema E."/>
            <person name="Ishida J."/>
            <person name="Jiang P.X."/>
            <person name="Jones T."/>
            <person name="Kawai J."/>
            <person name="Kamiya A."/>
            <person name="Meyers C."/>
            <person name="Nakajima M."/>
            <person name="Narusaka M."/>
            <person name="Seki M."/>
            <person name="Sakurai T."/>
            <person name="Satou M."/>
            <person name="Tamse R."/>
            <person name="Vaysberg M."/>
            <person name="Wallender E.K."/>
            <person name="Wong C."/>
            <person name="Yamamura Y."/>
            <person name="Yuan S."/>
            <person name="Shinozaki K."/>
            <person name="Davis R.W."/>
            <person name="Theologis A."/>
            <person name="Ecker J.R."/>
        </authorList>
    </citation>
    <scope>NUCLEOTIDE SEQUENCE [LARGE SCALE MRNA] (ISOFORM 1)</scope>
    <source>
        <strain>cv. Columbia</strain>
    </source>
</reference>
<reference key="7">
    <citation type="journal article" date="2000" name="Plant Cell">
        <title>HRT gene function requires interaction between a NAC protein and viral capsid protein to confer resistance to turnip crinkle virus.</title>
        <authorList>
            <person name="Ren T."/>
            <person name="Qu F."/>
            <person name="Morris T.J."/>
        </authorList>
    </citation>
    <scope>INTERACTION WITH TIP</scope>
</reference>
<reference key="8">
    <citation type="journal article" date="2008" name="Cell Host Microbe">
        <title>CRT1, an Arabidopsis ATPase that interacts with diverse resistance proteins and modulates disease resistance to turnip crinkle virus.</title>
        <authorList>
            <person name="Kang H.-G."/>
            <person name="Kuhl J.C."/>
            <person name="Kachroo P."/>
            <person name="Klessig D.F."/>
        </authorList>
    </citation>
    <scope>INTERACTION WITH MORC1/CRT1</scope>
</reference>
<reference key="9">
    <citation type="journal article" date="2010" name="Plant Cell">
        <title>Endosome-associated CRT1 functions early in resistance gene-mediated defense signaling in Arabidopsis and tobacco.</title>
        <authorList>
            <person name="Kang H.-G."/>
            <person name="Oh C.-S."/>
            <person name="Sato M."/>
            <person name="Katagiri F."/>
            <person name="Glazebrook J."/>
            <person name="Takahashi H."/>
            <person name="Kachroo P."/>
            <person name="Martin G.B."/>
            <person name="Klessig D.F."/>
        </authorList>
    </citation>
    <scope>INTERACTION WITH MORC1/CRT1</scope>
</reference>
<reference key="10">
    <citation type="journal article" date="2010" name="Mol. Plant Microbe Interact.">
        <title>The Arabidopsis downy mildew resistance gene RPP8 is induced by pathogens and salicylic acid and is regulated by W box cis elements.</title>
        <authorList>
            <person name="Mohr T.J."/>
            <person name="Mammarella N.D."/>
            <person name="Hoff T."/>
            <person name="Woffenden B.J."/>
            <person name="Jelesko J.G."/>
            <person name="McDowell J.M."/>
        </authorList>
    </citation>
    <scope>INDUCTION BY HYALOPERONOSPORA ARABIDOPSIDIS; BTH; WOUNDING AND SALICYLIC ACID</scope>
    <scope>TISSUE SPECIFICITY</scope>
    <source>
        <strain>cv. Columbia</strain>
    </source>
</reference>
<reference key="11">
    <citation type="journal article" date="2010" name="Proc. Natl. Acad. Sci. U.S.A.">
        <title>Cryptochrome 2 and phototropin 2 regulate resistance protein-mediated viral defense by negatively regulating an E3 ubiquitin ligase.</title>
        <authorList>
            <person name="Jeong R.-D."/>
            <person name="Chandra-Shekara A.C."/>
            <person name="Barman S.R."/>
            <person name="Navarre D."/>
            <person name="Klessig D.F."/>
            <person name="Kachroo A."/>
            <person name="Kachroo P."/>
        </authorList>
    </citation>
    <scope>SUBCELLULAR LOCATION</scope>
    <scope>REGULATION BY BLUE-LIGHT AND DARKNESS</scope>
    <scope>INTERACTION WITH COP1</scope>
</reference>
<reference key="12">
    <citation type="journal article" date="2011" name="PLoS Pathog.">
        <title>SAG101 forms a ternary complex with EDS1 and PAD4 and is required for resistance signaling against turnip crinkle virus.</title>
        <authorList>
            <person name="Zhu S."/>
            <person name="Jeong R.-D."/>
            <person name="Venugopal S.C."/>
            <person name="Lapchyk L."/>
            <person name="Navarre D."/>
            <person name="Kachroo A."/>
            <person name="Kachroo P."/>
        </authorList>
    </citation>
    <scope>FUNCTION</scope>
    <scope>INDUCTION BY SALICYLIC ACID</scope>
</reference>
<protein>
    <recommendedName>
        <fullName>Disease resistance protein RPP8</fullName>
    </recommendedName>
    <alternativeName>
        <fullName>Resistance to Peronospora parasitica protein 8</fullName>
    </alternativeName>
</protein>
<comment type="function">
    <text evidence="8 9">Disease resistance protein. Resistance proteins guard the plant against pathogens that contain an appropriate avirulence protein via an indirect interaction with this avirulence protein. That triggers a defense system including the hypersensitive response, which restricts the pathogen growth. The interaction with TIP (TCV-interacting protein) may be essential for the recognition of the avirulence proteins, and the triggering of the defense response. Triggers resistance to turnip crinkle virus (TCV) via a SAG101-dependent pathway.</text>
</comment>
<comment type="subunit">
    <text evidence="3 4 5 6">Interacts with the NAC protein TIP (PubMed:11041886). Interacts with MORC1/CRT1 (PubMed:18191794, PubMed:20332379). Interacts with COP1 and is subsequently degraded in a 26s proteasome dependent manner (PubMed:20624951).</text>
</comment>
<comment type="interaction">
    <interactant intactId="EBI-15865035">
        <id>Q8W4J9</id>
    </interactant>
    <interactant intactId="EBI-301649">
        <id>P43254</id>
        <label>COP1</label>
    </interactant>
    <organismsDiffer>false</organismsDiffer>
    <experiments>2</experiments>
</comment>
<comment type="subcellular location">
    <subcellularLocation>
        <location evidence="6">Cell membrane</location>
    </subcellularLocation>
</comment>
<comment type="alternative products">
    <event type="alternative splicing"/>
    <isoform>
        <id>Q8W4J9-1</id>
        <name>1</name>
        <sequence type="displayed"/>
    </isoform>
    <isoform>
        <id>Q8W4J9-2</id>
        <name>2</name>
        <sequence type="described" ref="VSP_007171 VSP_007172"/>
    </isoform>
</comment>
<comment type="tissue specificity">
    <text evidence="7">Mostly expressed in leaves, and, to a lower extent, in roots.</text>
</comment>
<comment type="induction">
    <text evidence="6 7 8">By salicylic acid (SA) (PubMed:20831409, PubMed:22072959). Induced by Hyaloperonospora arabidopsidis, benzothiadiazole (BTH) and wounding (PubMed:20831409). Degraded in darkness and in blue-light (PubMed:20624951).</text>
</comment>
<comment type="domain">
    <text evidence="2">The LRR repeats probably act as specificity determinant of pathogen recognition.</text>
</comment>
<comment type="polymorphism">
    <text>The strong polymorphisms present in cv. Di-17 and cv. Columbia are probably due to an unequal crossing-over between the highly related RPP8 and RPH8A genes present in cv. Landsberg erecta. Such variations probably modify the specificity of pathogen recognition.</text>
</comment>
<comment type="miscellaneous">
    <text>In cv. Columbia and cv. Landsberg erecta, RPP8 specifically recognizes the Emco5 avirulence protein from Hyaloperonospora parasitica, while it is not the case in cv. Di-17, where it confers resistance to Turnip Crinkle Virus upon recognition of the viral capsid protein.</text>
</comment>
<comment type="miscellaneous">
    <molecule>Isoform 2</molecule>
    <text evidence="11">Has been shown to exist only in cv. Columbia so far.</text>
</comment>
<comment type="similarity">
    <text evidence="11">Belongs to the disease resistance NB-LRR family. RPP8/HRT subfamily.</text>
</comment>
<comment type="online information" name="NIB-LRRS">
    <link uri="http://niblrrs.ucdavis.edu"/>
    <text>Functional and comparative genomics of disease resistance gene homologs</text>
</comment>